<accession>O34406</accession>
<accession>Q795U6</accession>
<feature type="signal peptide" evidence="1">
    <location>
        <begin position="1"/>
        <end position="20"/>
    </location>
</feature>
<feature type="chain" id="PRO_0000281739" description="L-cystine-binding protein TcyJ">
    <location>
        <begin position="21"/>
        <end position="269"/>
    </location>
</feature>
<feature type="lipid moiety-binding region" description="N-palmitoyl cysteine" evidence="1">
    <location>
        <position position="21"/>
    </location>
</feature>
<feature type="lipid moiety-binding region" description="S-diacylglycerol cysteine" evidence="1">
    <location>
        <position position="21"/>
    </location>
</feature>
<gene>
    <name type="primary">tcyJ</name>
    <name type="synonym">ytmJ</name>
    <name type="ordered locus">BSU29380</name>
</gene>
<name>TCYJ_BACSU</name>
<reference key="1">
    <citation type="journal article" date="1997" name="Microbiology">
        <title>Sequencing and functional annotation of the Bacillus subtilis genes in the 200 kb rrnB-dnaB region.</title>
        <authorList>
            <person name="Lapidus A."/>
            <person name="Galleron N."/>
            <person name="Sorokin A."/>
            <person name="Ehrlich S.D."/>
        </authorList>
    </citation>
    <scope>NUCLEOTIDE SEQUENCE [GENOMIC DNA]</scope>
    <source>
        <strain>168</strain>
    </source>
</reference>
<reference key="2">
    <citation type="journal article" date="1997" name="Nature">
        <title>The complete genome sequence of the Gram-positive bacterium Bacillus subtilis.</title>
        <authorList>
            <person name="Kunst F."/>
            <person name="Ogasawara N."/>
            <person name="Moszer I."/>
            <person name="Albertini A.M."/>
            <person name="Alloni G."/>
            <person name="Azevedo V."/>
            <person name="Bertero M.G."/>
            <person name="Bessieres P."/>
            <person name="Bolotin A."/>
            <person name="Borchert S."/>
            <person name="Borriss R."/>
            <person name="Boursier L."/>
            <person name="Brans A."/>
            <person name="Braun M."/>
            <person name="Brignell S.C."/>
            <person name="Bron S."/>
            <person name="Brouillet S."/>
            <person name="Bruschi C.V."/>
            <person name="Caldwell B."/>
            <person name="Capuano V."/>
            <person name="Carter N.M."/>
            <person name="Choi S.-K."/>
            <person name="Codani J.-J."/>
            <person name="Connerton I.F."/>
            <person name="Cummings N.J."/>
            <person name="Daniel R.A."/>
            <person name="Denizot F."/>
            <person name="Devine K.M."/>
            <person name="Duesterhoeft A."/>
            <person name="Ehrlich S.D."/>
            <person name="Emmerson P.T."/>
            <person name="Entian K.-D."/>
            <person name="Errington J."/>
            <person name="Fabret C."/>
            <person name="Ferrari E."/>
            <person name="Foulger D."/>
            <person name="Fritz C."/>
            <person name="Fujita M."/>
            <person name="Fujita Y."/>
            <person name="Fuma S."/>
            <person name="Galizzi A."/>
            <person name="Galleron N."/>
            <person name="Ghim S.-Y."/>
            <person name="Glaser P."/>
            <person name="Goffeau A."/>
            <person name="Golightly E.J."/>
            <person name="Grandi G."/>
            <person name="Guiseppi G."/>
            <person name="Guy B.J."/>
            <person name="Haga K."/>
            <person name="Haiech J."/>
            <person name="Harwood C.R."/>
            <person name="Henaut A."/>
            <person name="Hilbert H."/>
            <person name="Holsappel S."/>
            <person name="Hosono S."/>
            <person name="Hullo M.-F."/>
            <person name="Itaya M."/>
            <person name="Jones L.-M."/>
            <person name="Joris B."/>
            <person name="Karamata D."/>
            <person name="Kasahara Y."/>
            <person name="Klaerr-Blanchard M."/>
            <person name="Klein C."/>
            <person name="Kobayashi Y."/>
            <person name="Koetter P."/>
            <person name="Koningstein G."/>
            <person name="Krogh S."/>
            <person name="Kumano M."/>
            <person name="Kurita K."/>
            <person name="Lapidus A."/>
            <person name="Lardinois S."/>
            <person name="Lauber J."/>
            <person name="Lazarevic V."/>
            <person name="Lee S.-M."/>
            <person name="Levine A."/>
            <person name="Liu H."/>
            <person name="Masuda S."/>
            <person name="Mauel C."/>
            <person name="Medigue C."/>
            <person name="Medina N."/>
            <person name="Mellado R.P."/>
            <person name="Mizuno M."/>
            <person name="Moestl D."/>
            <person name="Nakai S."/>
            <person name="Noback M."/>
            <person name="Noone D."/>
            <person name="O'Reilly M."/>
            <person name="Ogawa K."/>
            <person name="Ogiwara A."/>
            <person name="Oudega B."/>
            <person name="Park S.-H."/>
            <person name="Parro V."/>
            <person name="Pohl T.M."/>
            <person name="Portetelle D."/>
            <person name="Porwollik S."/>
            <person name="Prescott A.M."/>
            <person name="Presecan E."/>
            <person name="Pujic P."/>
            <person name="Purnelle B."/>
            <person name="Rapoport G."/>
            <person name="Rey M."/>
            <person name="Reynolds S."/>
            <person name="Rieger M."/>
            <person name="Rivolta C."/>
            <person name="Rocha E."/>
            <person name="Roche B."/>
            <person name="Rose M."/>
            <person name="Sadaie Y."/>
            <person name="Sato T."/>
            <person name="Scanlan E."/>
            <person name="Schleich S."/>
            <person name="Schroeter R."/>
            <person name="Scoffone F."/>
            <person name="Sekiguchi J."/>
            <person name="Sekowska A."/>
            <person name="Seror S.J."/>
            <person name="Serror P."/>
            <person name="Shin B.-S."/>
            <person name="Soldo B."/>
            <person name="Sorokin A."/>
            <person name="Tacconi E."/>
            <person name="Takagi T."/>
            <person name="Takahashi H."/>
            <person name="Takemaru K."/>
            <person name="Takeuchi M."/>
            <person name="Tamakoshi A."/>
            <person name="Tanaka T."/>
            <person name="Terpstra P."/>
            <person name="Tognoni A."/>
            <person name="Tosato V."/>
            <person name="Uchiyama S."/>
            <person name="Vandenbol M."/>
            <person name="Vannier F."/>
            <person name="Vassarotti A."/>
            <person name="Viari A."/>
            <person name="Wambutt R."/>
            <person name="Wedler E."/>
            <person name="Wedler H."/>
            <person name="Weitzenegger T."/>
            <person name="Winters P."/>
            <person name="Wipat A."/>
            <person name="Yamamoto H."/>
            <person name="Yamane K."/>
            <person name="Yasumoto K."/>
            <person name="Yata K."/>
            <person name="Yoshida K."/>
            <person name="Yoshikawa H.-F."/>
            <person name="Zumstein E."/>
            <person name="Yoshikawa H."/>
            <person name="Danchin A."/>
        </authorList>
    </citation>
    <scope>NUCLEOTIDE SEQUENCE [LARGE SCALE GENOMIC DNA]</scope>
    <source>
        <strain>168</strain>
    </source>
</reference>
<reference key="3">
    <citation type="journal article" date="2002" name="J. Bacteriol.">
        <title>Global expression profile of Bacillus subtilis grown in the presence of sulfate or methionine.</title>
        <authorList>
            <person name="Auger S."/>
            <person name="Danchin A."/>
            <person name="Martin-Verstraete I."/>
        </authorList>
    </citation>
    <scope>INDUCTION</scope>
    <source>
        <strain>168</strain>
    </source>
</reference>
<reference key="4">
    <citation type="journal article" date="2004" name="J. Bacteriol.">
        <title>Three different systems participate in L-cystine uptake in Bacillus subtilis.</title>
        <authorList>
            <person name="Burguiere P."/>
            <person name="Auger S."/>
            <person name="Hullo M.-F."/>
            <person name="Danchin A."/>
            <person name="Martin-Verstraete I."/>
        </authorList>
    </citation>
    <scope>FUNCTION IN L-CYSTINE TRANSPORT</scope>
    <source>
        <strain>168</strain>
    </source>
</reference>
<proteinExistence type="evidence at protein level"/>
<keyword id="KW-0029">Amino-acid transport</keyword>
<keyword id="KW-1003">Cell membrane</keyword>
<keyword id="KW-0449">Lipoprotein</keyword>
<keyword id="KW-0472">Membrane</keyword>
<keyword id="KW-0564">Palmitate</keyword>
<keyword id="KW-1185">Reference proteome</keyword>
<keyword id="KW-0732">Signal</keyword>
<keyword id="KW-0813">Transport</keyword>
<sequence>MNKRKGLVLLLSVFALLGGGCSQTNNKTDRQAQTVIVGTGTDFPNIAFLNEKGELTGYDIEVMKAIDKELPQYTFEFKTMDFSNLLTSLGNKKIDVIAHNMAKNKEREKRFLYHKVPYNYSPMYITVKEDNHKIHTLKDLHGKTVIVGATSNAADYITKYNKTHGSPIHLKYAGQGSNDTANQIETGRADATIATPFAVDFQNKTHAFRQKTVGDVLLDTEVYFMFNKGSQTLADDTDQAIKKLEKNGTLKKLSRKWLGADYSKSSFEK</sequence>
<dbReference type="EMBL" id="AF008220">
    <property type="protein sequence ID" value="AAC00325.1"/>
    <property type="molecule type" value="Genomic_DNA"/>
</dbReference>
<dbReference type="EMBL" id="AL009126">
    <property type="protein sequence ID" value="CAB14898.1"/>
    <property type="molecule type" value="Genomic_DNA"/>
</dbReference>
<dbReference type="PIR" id="D69996">
    <property type="entry name" value="D69996"/>
</dbReference>
<dbReference type="RefSeq" id="NP_390816.1">
    <property type="nucleotide sequence ID" value="NC_000964.3"/>
</dbReference>
<dbReference type="RefSeq" id="WP_004399114.1">
    <property type="nucleotide sequence ID" value="NZ_OZ025638.1"/>
</dbReference>
<dbReference type="SMR" id="O34406"/>
<dbReference type="FunCoup" id="O34406">
    <property type="interactions" value="134"/>
</dbReference>
<dbReference type="STRING" id="224308.BSU29380"/>
<dbReference type="TCDB" id="3.A.1.3.13">
    <property type="family name" value="the atp-binding cassette (abc) superfamily"/>
</dbReference>
<dbReference type="PaxDb" id="224308-BSU29380"/>
<dbReference type="EnsemblBacteria" id="CAB14898">
    <property type="protein sequence ID" value="CAB14898"/>
    <property type="gene ID" value="BSU_29380"/>
</dbReference>
<dbReference type="GeneID" id="937354"/>
<dbReference type="KEGG" id="bsu:BSU29380"/>
<dbReference type="PATRIC" id="fig|224308.179.peg.3192"/>
<dbReference type="eggNOG" id="COG0834">
    <property type="taxonomic scope" value="Bacteria"/>
</dbReference>
<dbReference type="InParanoid" id="O34406"/>
<dbReference type="OrthoDB" id="8613538at2"/>
<dbReference type="PhylomeDB" id="O34406"/>
<dbReference type="BioCyc" id="BSUB:BSU29380-MONOMER"/>
<dbReference type="SABIO-RK" id="O34406"/>
<dbReference type="Proteomes" id="UP000001570">
    <property type="component" value="Chromosome"/>
</dbReference>
<dbReference type="GO" id="GO:0005886">
    <property type="term" value="C:plasma membrane"/>
    <property type="evidence" value="ECO:0007669"/>
    <property type="project" value="UniProtKB-SubCell"/>
</dbReference>
<dbReference type="GO" id="GO:0006865">
    <property type="term" value="P:amino acid transport"/>
    <property type="evidence" value="ECO:0007669"/>
    <property type="project" value="UniProtKB-KW"/>
</dbReference>
<dbReference type="CDD" id="cd13710">
    <property type="entry name" value="PBP2_TcyK"/>
    <property type="match status" value="1"/>
</dbReference>
<dbReference type="Gene3D" id="3.40.190.10">
    <property type="entry name" value="Periplasmic binding protein-like II"/>
    <property type="match status" value="2"/>
</dbReference>
<dbReference type="InterPro" id="IPR001638">
    <property type="entry name" value="Solute-binding_3/MltF_N"/>
</dbReference>
<dbReference type="PANTHER" id="PTHR35936:SF18">
    <property type="entry name" value="L-CYSTINE-BINDING PROTEIN TCYJ"/>
    <property type="match status" value="1"/>
</dbReference>
<dbReference type="PANTHER" id="PTHR35936">
    <property type="entry name" value="MEMBRANE-BOUND LYTIC MUREIN TRANSGLYCOSYLASE F"/>
    <property type="match status" value="1"/>
</dbReference>
<dbReference type="Pfam" id="PF00497">
    <property type="entry name" value="SBP_bac_3"/>
    <property type="match status" value="1"/>
</dbReference>
<dbReference type="SMART" id="SM00062">
    <property type="entry name" value="PBPb"/>
    <property type="match status" value="1"/>
</dbReference>
<dbReference type="SUPFAM" id="SSF53850">
    <property type="entry name" value="Periplasmic binding protein-like II"/>
    <property type="match status" value="1"/>
</dbReference>
<dbReference type="PROSITE" id="PS51257">
    <property type="entry name" value="PROKAR_LIPOPROTEIN"/>
    <property type="match status" value="1"/>
</dbReference>
<protein>
    <recommendedName>
        <fullName>L-cystine-binding protein TcyJ</fullName>
    </recommendedName>
</protein>
<evidence type="ECO:0000255" key="1">
    <source>
        <dbReference type="PROSITE-ProRule" id="PRU00303"/>
    </source>
</evidence>
<evidence type="ECO:0000269" key="2">
    <source>
    </source>
</evidence>
<evidence type="ECO:0000269" key="3">
    <source>
    </source>
</evidence>
<evidence type="ECO:0000305" key="4"/>
<organism>
    <name type="scientific">Bacillus subtilis (strain 168)</name>
    <dbReference type="NCBI Taxonomy" id="224308"/>
    <lineage>
        <taxon>Bacteria</taxon>
        <taxon>Bacillati</taxon>
        <taxon>Bacillota</taxon>
        <taxon>Bacilli</taxon>
        <taxon>Bacillales</taxon>
        <taxon>Bacillaceae</taxon>
        <taxon>Bacillus</taxon>
    </lineage>
</organism>
<comment type="function">
    <text evidence="3">Part of the ABC transporter complex TcyJKLMN involved in L-cystine import. Is also involved in cystathionine, djenkolate, and S-methylcysteine transport.</text>
</comment>
<comment type="subunit">
    <text evidence="4">The complex is composed of two ATP-binding proteins (TcyN), two transmembrane proteins (TcyL and TcyM) and two solute-binding proteins (TcyJ and TcyK).</text>
</comment>
<comment type="subcellular location">
    <subcellularLocation>
        <location evidence="4">Cell membrane</location>
        <topology evidence="4">Lipid-anchor</topology>
    </subcellularLocation>
</comment>
<comment type="induction">
    <text evidence="2">More strongly expressed in the presence of methionine than in the presence of sulfate.</text>
</comment>
<comment type="similarity">
    <text evidence="4">Belongs to the bacterial solute-binding protein 3 family.</text>
</comment>